<keyword id="KW-0028">Amino-acid biosynthesis</keyword>
<keyword id="KW-0368">Histidine biosynthesis</keyword>
<keyword id="KW-0378">Hydrolase</keyword>
<keyword id="KW-0486">Methionine biosynthesis</keyword>
<keyword id="KW-0511">Multifunctional enzyme</keyword>
<keyword id="KW-0521">NADP</keyword>
<keyword id="KW-0554">One-carbon metabolism</keyword>
<keyword id="KW-0560">Oxidoreductase</keyword>
<keyword id="KW-0658">Purine biosynthesis</keyword>
<keyword id="KW-1185">Reference proteome</keyword>
<comment type="function">
    <text evidence="1">Catalyzes the oxidation of 5,10-methylenetetrahydrofolate to 5,10-methenyltetrahydrofolate and then the hydrolysis of 5,10-methenyltetrahydrofolate to 10-formyltetrahydrofolate.</text>
</comment>
<comment type="catalytic activity">
    <reaction evidence="1">
        <text>(6R)-5,10-methylene-5,6,7,8-tetrahydrofolate + NADP(+) = (6R)-5,10-methenyltetrahydrofolate + NADPH</text>
        <dbReference type="Rhea" id="RHEA:22812"/>
        <dbReference type="ChEBI" id="CHEBI:15636"/>
        <dbReference type="ChEBI" id="CHEBI:57455"/>
        <dbReference type="ChEBI" id="CHEBI:57783"/>
        <dbReference type="ChEBI" id="CHEBI:58349"/>
        <dbReference type="EC" id="1.5.1.5"/>
    </reaction>
</comment>
<comment type="catalytic activity">
    <reaction evidence="1">
        <text>(6R)-5,10-methenyltetrahydrofolate + H2O = (6R)-10-formyltetrahydrofolate + H(+)</text>
        <dbReference type="Rhea" id="RHEA:23700"/>
        <dbReference type="ChEBI" id="CHEBI:15377"/>
        <dbReference type="ChEBI" id="CHEBI:15378"/>
        <dbReference type="ChEBI" id="CHEBI:57455"/>
        <dbReference type="ChEBI" id="CHEBI:195366"/>
        <dbReference type="EC" id="3.5.4.9"/>
    </reaction>
</comment>
<comment type="pathway">
    <text evidence="1">One-carbon metabolism; tetrahydrofolate interconversion.</text>
</comment>
<comment type="subunit">
    <text evidence="1">Homodimer.</text>
</comment>
<comment type="similarity">
    <text evidence="1">Belongs to the tetrahydrofolate dehydrogenase/cyclohydrolase family.</text>
</comment>
<dbReference type="EC" id="1.5.1.5" evidence="1"/>
<dbReference type="EC" id="3.5.4.9" evidence="1"/>
<dbReference type="EMBL" id="AM398681">
    <property type="protein sequence ID" value="CAL43548.1"/>
    <property type="molecule type" value="Genomic_DNA"/>
</dbReference>
<dbReference type="RefSeq" id="WP_011963593.1">
    <property type="nucleotide sequence ID" value="NC_009613.3"/>
</dbReference>
<dbReference type="RefSeq" id="YP_001296357.1">
    <property type="nucleotide sequence ID" value="NC_009613.3"/>
</dbReference>
<dbReference type="SMR" id="A6GZM5"/>
<dbReference type="STRING" id="402612.FP1475"/>
<dbReference type="EnsemblBacteria" id="CAL43548">
    <property type="protein sequence ID" value="CAL43548"/>
    <property type="gene ID" value="FP1475"/>
</dbReference>
<dbReference type="KEGG" id="fps:FP1475"/>
<dbReference type="PATRIC" id="fig|402612.5.peg.1487"/>
<dbReference type="eggNOG" id="COG0190">
    <property type="taxonomic scope" value="Bacteria"/>
</dbReference>
<dbReference type="HOGENOM" id="CLU_034045_2_1_10"/>
<dbReference type="OrthoDB" id="9803580at2"/>
<dbReference type="UniPathway" id="UPA00193"/>
<dbReference type="Proteomes" id="UP000006394">
    <property type="component" value="Chromosome"/>
</dbReference>
<dbReference type="GO" id="GO:0005829">
    <property type="term" value="C:cytosol"/>
    <property type="evidence" value="ECO:0007669"/>
    <property type="project" value="TreeGrafter"/>
</dbReference>
<dbReference type="GO" id="GO:0004477">
    <property type="term" value="F:methenyltetrahydrofolate cyclohydrolase activity"/>
    <property type="evidence" value="ECO:0007669"/>
    <property type="project" value="UniProtKB-UniRule"/>
</dbReference>
<dbReference type="GO" id="GO:0004488">
    <property type="term" value="F:methylenetetrahydrofolate dehydrogenase (NADP+) activity"/>
    <property type="evidence" value="ECO:0007669"/>
    <property type="project" value="UniProtKB-UniRule"/>
</dbReference>
<dbReference type="GO" id="GO:0000105">
    <property type="term" value="P:L-histidine biosynthetic process"/>
    <property type="evidence" value="ECO:0007669"/>
    <property type="project" value="UniProtKB-KW"/>
</dbReference>
<dbReference type="GO" id="GO:0009086">
    <property type="term" value="P:methionine biosynthetic process"/>
    <property type="evidence" value="ECO:0007669"/>
    <property type="project" value="UniProtKB-KW"/>
</dbReference>
<dbReference type="GO" id="GO:0006164">
    <property type="term" value="P:purine nucleotide biosynthetic process"/>
    <property type="evidence" value="ECO:0007669"/>
    <property type="project" value="UniProtKB-KW"/>
</dbReference>
<dbReference type="GO" id="GO:0035999">
    <property type="term" value="P:tetrahydrofolate interconversion"/>
    <property type="evidence" value="ECO:0007669"/>
    <property type="project" value="UniProtKB-UniRule"/>
</dbReference>
<dbReference type="CDD" id="cd01080">
    <property type="entry name" value="NAD_bind_m-THF_DH_Cyclohyd"/>
    <property type="match status" value="1"/>
</dbReference>
<dbReference type="FunFam" id="3.40.50.720:FF:000189">
    <property type="entry name" value="Bifunctional protein FolD"/>
    <property type="match status" value="1"/>
</dbReference>
<dbReference type="FunFam" id="3.40.50.10860:FF:000005">
    <property type="entry name" value="C-1-tetrahydrofolate synthase, cytoplasmic, putative"/>
    <property type="match status" value="1"/>
</dbReference>
<dbReference type="Gene3D" id="3.40.50.10860">
    <property type="entry name" value="Leucine Dehydrogenase, chain A, domain 1"/>
    <property type="match status" value="1"/>
</dbReference>
<dbReference type="Gene3D" id="3.40.50.720">
    <property type="entry name" value="NAD(P)-binding Rossmann-like Domain"/>
    <property type="match status" value="1"/>
</dbReference>
<dbReference type="HAMAP" id="MF_01576">
    <property type="entry name" value="THF_DHG_CYH"/>
    <property type="match status" value="1"/>
</dbReference>
<dbReference type="InterPro" id="IPR046346">
    <property type="entry name" value="Aminoacid_DH-like_N_sf"/>
</dbReference>
<dbReference type="InterPro" id="IPR036291">
    <property type="entry name" value="NAD(P)-bd_dom_sf"/>
</dbReference>
<dbReference type="InterPro" id="IPR000672">
    <property type="entry name" value="THF_DH/CycHdrlase"/>
</dbReference>
<dbReference type="InterPro" id="IPR020630">
    <property type="entry name" value="THF_DH/CycHdrlase_cat_dom"/>
</dbReference>
<dbReference type="InterPro" id="IPR020867">
    <property type="entry name" value="THF_DH/CycHdrlase_CS"/>
</dbReference>
<dbReference type="InterPro" id="IPR020631">
    <property type="entry name" value="THF_DH/CycHdrlase_NAD-bd_dom"/>
</dbReference>
<dbReference type="PANTHER" id="PTHR48099:SF5">
    <property type="entry name" value="C-1-TETRAHYDROFOLATE SYNTHASE, CYTOPLASMIC"/>
    <property type="match status" value="1"/>
</dbReference>
<dbReference type="PANTHER" id="PTHR48099">
    <property type="entry name" value="C-1-TETRAHYDROFOLATE SYNTHASE, CYTOPLASMIC-RELATED"/>
    <property type="match status" value="1"/>
</dbReference>
<dbReference type="Pfam" id="PF00763">
    <property type="entry name" value="THF_DHG_CYH"/>
    <property type="match status" value="1"/>
</dbReference>
<dbReference type="Pfam" id="PF02882">
    <property type="entry name" value="THF_DHG_CYH_C"/>
    <property type="match status" value="1"/>
</dbReference>
<dbReference type="PRINTS" id="PR00085">
    <property type="entry name" value="THFDHDRGNASE"/>
</dbReference>
<dbReference type="SUPFAM" id="SSF53223">
    <property type="entry name" value="Aminoacid dehydrogenase-like, N-terminal domain"/>
    <property type="match status" value="1"/>
</dbReference>
<dbReference type="SUPFAM" id="SSF51735">
    <property type="entry name" value="NAD(P)-binding Rossmann-fold domains"/>
    <property type="match status" value="1"/>
</dbReference>
<dbReference type="PROSITE" id="PS00766">
    <property type="entry name" value="THF_DHG_CYH_1"/>
    <property type="match status" value="1"/>
</dbReference>
<dbReference type="PROSITE" id="PS00767">
    <property type="entry name" value="THF_DHG_CYH_2"/>
    <property type="match status" value="1"/>
</dbReference>
<accession>A6GZM5</accession>
<gene>
    <name evidence="1" type="primary">folD</name>
    <name type="ordered locus">FP1475</name>
</gene>
<protein>
    <recommendedName>
        <fullName evidence="1">Bifunctional protein FolD</fullName>
    </recommendedName>
    <domain>
        <recommendedName>
            <fullName evidence="1">Methylenetetrahydrofolate dehydrogenase</fullName>
            <ecNumber evidence="1">1.5.1.5</ecNumber>
        </recommendedName>
    </domain>
    <domain>
        <recommendedName>
            <fullName evidence="1">Methenyltetrahydrofolate cyclohydrolase</fullName>
            <ecNumber evidence="1">3.5.4.9</ecNumber>
        </recommendedName>
    </domain>
</protein>
<sequence>MILLDGKKTAQDIKNEITAEVNKMKANGEKVPHLAALIVGSDGASLTYVGSKVKACELVGFESTLVKMPSTTSETELLKKIKELNQNDDIDGFIVQLPLPEQIDTQKVLMTIDPSKDVDGFHPENFGKMALDMTTFIPATPFGILELLERYGVETKGKHTVVIGRSHIVGRPMSILMGRKGFPGNSTVTLTHSYTKNIAQITTQADIIISALGVPNYLKAEMVKDGAVIIDVGITRVPDETNEKGYVITGDVDFENVSKKASHITPVPGGVGPMTIAMLLKNTLLAREQRKVNN</sequence>
<proteinExistence type="inferred from homology"/>
<feature type="chain" id="PRO_0000305815" description="Bifunctional protein FolD">
    <location>
        <begin position="1"/>
        <end position="294"/>
    </location>
</feature>
<feature type="binding site" evidence="1">
    <location>
        <begin position="164"/>
        <end position="166"/>
    </location>
    <ligand>
        <name>NADP(+)</name>
        <dbReference type="ChEBI" id="CHEBI:58349"/>
    </ligand>
</feature>
<feature type="binding site" evidence="1">
    <location>
        <position position="193"/>
    </location>
    <ligand>
        <name>NADP(+)</name>
        <dbReference type="ChEBI" id="CHEBI:58349"/>
    </ligand>
</feature>
<feature type="binding site" evidence="1">
    <location>
        <position position="234"/>
    </location>
    <ligand>
        <name>NADP(+)</name>
        <dbReference type="ChEBI" id="CHEBI:58349"/>
    </ligand>
</feature>
<reference key="1">
    <citation type="journal article" date="2007" name="Nat. Biotechnol.">
        <title>Complete genome sequence of the fish pathogen Flavobacterium psychrophilum.</title>
        <authorList>
            <person name="Duchaud E."/>
            <person name="Boussaha M."/>
            <person name="Loux V."/>
            <person name="Bernardet J.-F."/>
            <person name="Michel C."/>
            <person name="Kerouault B."/>
            <person name="Mondot S."/>
            <person name="Nicolas P."/>
            <person name="Bossy R."/>
            <person name="Caron C."/>
            <person name="Bessieres P."/>
            <person name="Gibrat J.-F."/>
            <person name="Claverol S."/>
            <person name="Dumetz F."/>
            <person name="Le Henaff M."/>
            <person name="Benmansour A."/>
        </authorList>
    </citation>
    <scope>NUCLEOTIDE SEQUENCE [LARGE SCALE GENOMIC DNA]</scope>
    <source>
        <strain>ATCC 49511 / DSM 21280 / CIP 103535 / JIP02/86</strain>
    </source>
</reference>
<evidence type="ECO:0000255" key="1">
    <source>
        <dbReference type="HAMAP-Rule" id="MF_01576"/>
    </source>
</evidence>
<organism>
    <name type="scientific">Flavobacterium psychrophilum (strain ATCC 49511 / DSM 21280 / CIP 103535 / JIP02/86)</name>
    <dbReference type="NCBI Taxonomy" id="402612"/>
    <lineage>
        <taxon>Bacteria</taxon>
        <taxon>Pseudomonadati</taxon>
        <taxon>Bacteroidota</taxon>
        <taxon>Flavobacteriia</taxon>
        <taxon>Flavobacteriales</taxon>
        <taxon>Flavobacteriaceae</taxon>
        <taxon>Flavobacterium</taxon>
    </lineage>
</organism>
<name>FOLD_FLAPJ</name>